<name>HFA1_YEAS7</name>
<feature type="transit peptide" description="Mitochondrion" evidence="2">
    <location>
        <begin position="1"/>
        <end position="104"/>
    </location>
</feature>
<feature type="chain" id="PRO_0000392101" description="Acetyl-CoA carboxylase, mitochondrial">
    <location>
        <begin position="105"/>
        <end position="2273"/>
    </location>
</feature>
<feature type="domain" description="Biotin carboxylation">
    <location>
        <begin position="134"/>
        <end position="635"/>
    </location>
</feature>
<feature type="domain" description="ATP-grasp" evidence="3">
    <location>
        <begin position="292"/>
        <end position="484"/>
    </location>
</feature>
<feature type="domain" description="Biotinyl-binding" evidence="4">
    <location>
        <begin position="763"/>
        <end position="837"/>
    </location>
</feature>
<feature type="domain" description="CoA carboxyltransferase N-terminal" evidence="5">
    <location>
        <begin position="1532"/>
        <end position="1867"/>
    </location>
</feature>
<feature type="domain" description="CoA carboxyltransferase C-terminal" evidence="6">
    <location>
        <begin position="1871"/>
        <end position="2187"/>
    </location>
</feature>
<feature type="region of interest" description="Carboxyltransferase" evidence="7">
    <location>
        <begin position="1532"/>
        <end position="2187"/>
    </location>
</feature>
<feature type="active site" evidence="1">
    <location>
        <position position="459"/>
    </location>
</feature>
<feature type="binding site" evidence="3">
    <location>
        <begin position="332"/>
        <end position="337"/>
    </location>
    <ligand>
        <name>ATP</name>
        <dbReference type="ChEBI" id="CHEBI:30616"/>
    </ligand>
</feature>
<feature type="binding site" evidence="1">
    <location>
        <position position="1776"/>
    </location>
    <ligand>
        <name>CoA</name>
        <dbReference type="ChEBI" id="CHEBI:57287"/>
    </ligand>
</feature>
<feature type="binding site" evidence="1">
    <location>
        <position position="2080"/>
    </location>
    <ligand>
        <name>CoA</name>
        <dbReference type="ChEBI" id="CHEBI:57287"/>
    </ligand>
</feature>
<feature type="binding site" evidence="1">
    <location>
        <position position="2082"/>
    </location>
    <ligand>
        <name>CoA</name>
        <dbReference type="ChEBI" id="CHEBI:57287"/>
    </ligand>
</feature>
<feature type="modified residue" description="N6-biotinyllysine" evidence="1 4">
    <location>
        <position position="804"/>
    </location>
</feature>
<organism>
    <name type="scientific">Saccharomyces cerevisiae (strain YJM789)</name>
    <name type="common">Baker's yeast</name>
    <dbReference type="NCBI Taxonomy" id="307796"/>
    <lineage>
        <taxon>Eukaryota</taxon>
        <taxon>Fungi</taxon>
        <taxon>Dikarya</taxon>
        <taxon>Ascomycota</taxon>
        <taxon>Saccharomycotina</taxon>
        <taxon>Saccharomycetes</taxon>
        <taxon>Saccharomycetales</taxon>
        <taxon>Saccharomycetaceae</taxon>
        <taxon>Saccharomyces</taxon>
    </lineage>
</organism>
<reference key="1">
    <citation type="journal article" date="2007" name="Proc. Natl. Acad. Sci. U.S.A.">
        <title>Genome sequencing and comparative analysis of Saccharomyces cerevisiae strain YJM789.</title>
        <authorList>
            <person name="Wei W."/>
            <person name="McCusker J.H."/>
            <person name="Hyman R.W."/>
            <person name="Jones T."/>
            <person name="Ning Y."/>
            <person name="Cao Z."/>
            <person name="Gu Z."/>
            <person name="Bruno D."/>
            <person name="Miranda M."/>
            <person name="Nguyen M."/>
            <person name="Wilhelmy J."/>
            <person name="Komp C."/>
            <person name="Tamse R."/>
            <person name="Wang X."/>
            <person name="Jia P."/>
            <person name="Luedi P."/>
            <person name="Oefner P.J."/>
            <person name="David L."/>
            <person name="Dietrich F.S."/>
            <person name="Li Y."/>
            <person name="Davis R.W."/>
            <person name="Steinmetz L.M."/>
        </authorList>
    </citation>
    <scope>NUCLEOTIDE SEQUENCE [LARGE SCALE GENOMIC DNA]</scope>
    <source>
        <strain>YJM789</strain>
    </source>
</reference>
<accession>A6ZMR9</accession>
<evidence type="ECO:0000250" key="1"/>
<evidence type="ECO:0000255" key="2"/>
<evidence type="ECO:0000255" key="3">
    <source>
        <dbReference type="PROSITE-ProRule" id="PRU00409"/>
    </source>
</evidence>
<evidence type="ECO:0000255" key="4">
    <source>
        <dbReference type="PROSITE-ProRule" id="PRU01066"/>
    </source>
</evidence>
<evidence type="ECO:0000255" key="5">
    <source>
        <dbReference type="PROSITE-ProRule" id="PRU01136"/>
    </source>
</evidence>
<evidence type="ECO:0000255" key="6">
    <source>
        <dbReference type="PROSITE-ProRule" id="PRU01137"/>
    </source>
</evidence>
<evidence type="ECO:0000255" key="7">
    <source>
        <dbReference type="PROSITE-ProRule" id="PRU01138"/>
    </source>
</evidence>
<evidence type="ECO:0000305" key="8"/>
<proteinExistence type="inferred from homology"/>
<comment type="function">
    <text evidence="1">Catalyzes the rate-limiting reaction in the mitochondrial fatty acid synthesis (FAS) type II pathway. Responsible for the production of the mitochondrial malonyl-CoA, used for the biosynthesis of the cofactor lipoic acid. This protein carries three functions: biotin carboxyl carrier protein, biotin carboxylase, and carboxyltransferase (By similarity).</text>
</comment>
<comment type="catalytic activity">
    <reaction>
        <text>hydrogencarbonate + acetyl-CoA + ATP = malonyl-CoA + ADP + phosphate + H(+)</text>
        <dbReference type="Rhea" id="RHEA:11308"/>
        <dbReference type="ChEBI" id="CHEBI:15378"/>
        <dbReference type="ChEBI" id="CHEBI:17544"/>
        <dbReference type="ChEBI" id="CHEBI:30616"/>
        <dbReference type="ChEBI" id="CHEBI:43474"/>
        <dbReference type="ChEBI" id="CHEBI:57288"/>
        <dbReference type="ChEBI" id="CHEBI:57384"/>
        <dbReference type="ChEBI" id="CHEBI:456216"/>
        <dbReference type="EC" id="6.4.1.2"/>
    </reaction>
</comment>
<comment type="catalytic activity">
    <reaction>
        <text>N(6)-biotinyl-L-lysyl-[protein] + hydrogencarbonate + ATP = N(6)-carboxybiotinyl-L-lysyl-[protein] + ADP + phosphate + H(+)</text>
        <dbReference type="Rhea" id="RHEA:13501"/>
        <dbReference type="Rhea" id="RHEA-COMP:10505"/>
        <dbReference type="Rhea" id="RHEA-COMP:10506"/>
        <dbReference type="ChEBI" id="CHEBI:15378"/>
        <dbReference type="ChEBI" id="CHEBI:17544"/>
        <dbReference type="ChEBI" id="CHEBI:30616"/>
        <dbReference type="ChEBI" id="CHEBI:43474"/>
        <dbReference type="ChEBI" id="CHEBI:83144"/>
        <dbReference type="ChEBI" id="CHEBI:83145"/>
        <dbReference type="ChEBI" id="CHEBI:456216"/>
        <dbReference type="EC" id="6.3.4.14"/>
    </reaction>
</comment>
<comment type="cofactor">
    <cofactor evidence="1">
        <name>biotin</name>
        <dbReference type="ChEBI" id="CHEBI:57586"/>
    </cofactor>
</comment>
<comment type="pathway">
    <text>Lipid metabolism; malonyl-CoA biosynthesis; malonyl-CoA from acetyl-CoA: step 1/1.</text>
</comment>
<comment type="subcellular location">
    <subcellularLocation>
        <location evidence="1">Mitochondrion</location>
    </subcellularLocation>
</comment>
<comment type="caution">
    <text evidence="8">The reading frame from which this protein is translated has no Met initiation codon near to the 5'-end. However, it is not a pseudogene. It has been shown that at least 72 residues upstream of the first in-frame start codon (Met-151) are required for function and proper subcellular location. May be translated by means of alternative initiation codon usage, programmed translational frame shifting, or mRNA editing.</text>
</comment>
<comment type="sequence caution" evidence="8">
    <conflict type="erroneous initiation">
        <sequence resource="EMBL-CDS" id="EDN64143"/>
    </conflict>
</comment>
<gene>
    <name type="primary">HFA1</name>
    <name type="ORF">SCY_4385</name>
</gene>
<protein>
    <recommendedName>
        <fullName>Acetyl-CoA carboxylase, mitochondrial</fullName>
        <shortName>ACC</shortName>
        <ecNumber>6.4.1.2</ecNumber>
    </recommendedName>
    <domain>
        <recommendedName>
            <fullName>Biotin carboxylase</fullName>
            <ecNumber>6.3.4.14</ecNumber>
        </recommendedName>
    </domain>
</protein>
<dbReference type="EC" id="6.4.1.2"/>
<dbReference type="EC" id="6.3.4.14"/>
<dbReference type="EMBL" id="AAFW02000021">
    <property type="protein sequence ID" value="EDN64143.1"/>
    <property type="status" value="ALT_INIT"/>
    <property type="molecule type" value="Genomic_DNA"/>
</dbReference>
<dbReference type="SMR" id="A6ZMR9"/>
<dbReference type="HOGENOM" id="CLU_000395_5_1_1"/>
<dbReference type="OrthoDB" id="24338at4893"/>
<dbReference type="UniPathway" id="UPA00655">
    <property type="reaction ID" value="UER00711"/>
</dbReference>
<dbReference type="Proteomes" id="UP000007060">
    <property type="component" value="Unassembled WGS sequence"/>
</dbReference>
<dbReference type="GO" id="GO:0005739">
    <property type="term" value="C:mitochondrion"/>
    <property type="evidence" value="ECO:0007669"/>
    <property type="project" value="UniProtKB-SubCell"/>
</dbReference>
<dbReference type="GO" id="GO:0003989">
    <property type="term" value="F:acetyl-CoA carboxylase activity"/>
    <property type="evidence" value="ECO:0007669"/>
    <property type="project" value="UniProtKB-EC"/>
</dbReference>
<dbReference type="GO" id="GO:0005524">
    <property type="term" value="F:ATP binding"/>
    <property type="evidence" value="ECO:0007669"/>
    <property type="project" value="UniProtKB-KW"/>
</dbReference>
<dbReference type="GO" id="GO:0004075">
    <property type="term" value="F:biotin carboxylase activity"/>
    <property type="evidence" value="ECO:0007669"/>
    <property type="project" value="UniProtKB-EC"/>
</dbReference>
<dbReference type="GO" id="GO:0046872">
    <property type="term" value="F:metal ion binding"/>
    <property type="evidence" value="ECO:0007669"/>
    <property type="project" value="InterPro"/>
</dbReference>
<dbReference type="GO" id="GO:0006633">
    <property type="term" value="P:fatty acid biosynthetic process"/>
    <property type="evidence" value="ECO:0007669"/>
    <property type="project" value="UniProtKB-KW"/>
</dbReference>
<dbReference type="GO" id="GO:2001295">
    <property type="term" value="P:malonyl-CoA biosynthetic process"/>
    <property type="evidence" value="ECO:0007669"/>
    <property type="project" value="UniProtKB-UniPathway"/>
</dbReference>
<dbReference type="CDD" id="cd06850">
    <property type="entry name" value="biotinyl_domain"/>
    <property type="match status" value="1"/>
</dbReference>
<dbReference type="FunFam" id="2.40.460.10:FF:000001">
    <property type="entry name" value="Acetyl-CoA carboxylase 1"/>
    <property type="match status" value="1"/>
</dbReference>
<dbReference type="FunFam" id="2.40.50.100:FF:000005">
    <property type="entry name" value="Acetyl-CoA carboxylase 1"/>
    <property type="match status" value="1"/>
</dbReference>
<dbReference type="FunFam" id="3.90.1770.10:FF:000001">
    <property type="entry name" value="acetyl-CoA carboxylase 1"/>
    <property type="match status" value="1"/>
</dbReference>
<dbReference type="FunFam" id="3.30.1490.20:FF:000003">
    <property type="entry name" value="acetyl-CoA carboxylase isoform X1"/>
    <property type="match status" value="1"/>
</dbReference>
<dbReference type="FunFam" id="3.40.50.20:FF:000005">
    <property type="entry name" value="acetyl-CoA carboxylase isoform X2"/>
    <property type="match status" value="1"/>
</dbReference>
<dbReference type="FunFam" id="3.90.226.10:FF:000010">
    <property type="entry name" value="acetyl-CoA carboxylase isoform X2"/>
    <property type="match status" value="1"/>
</dbReference>
<dbReference type="Gene3D" id="2.40.50.100">
    <property type="match status" value="1"/>
</dbReference>
<dbReference type="Gene3D" id="3.40.50.20">
    <property type="match status" value="1"/>
</dbReference>
<dbReference type="Gene3D" id="3.90.226.10">
    <property type="entry name" value="2-enoyl-CoA Hydratase, Chain A, domain 1"/>
    <property type="match status" value="2"/>
</dbReference>
<dbReference type="Gene3D" id="3.30.1490.20">
    <property type="entry name" value="ATP-grasp fold, A domain"/>
    <property type="match status" value="1"/>
</dbReference>
<dbReference type="Gene3D" id="3.30.470.20">
    <property type="entry name" value="ATP-grasp fold, B domain"/>
    <property type="match status" value="1"/>
</dbReference>
<dbReference type="Gene3D" id="2.40.460.10">
    <property type="entry name" value="Biotin dependent carboxylase carboxyltransferase"/>
    <property type="match status" value="1"/>
</dbReference>
<dbReference type="Gene3D" id="3.90.1770.10">
    <property type="entry name" value="PreATP-grasp domain"/>
    <property type="match status" value="1"/>
</dbReference>
<dbReference type="InterPro" id="IPR049076">
    <property type="entry name" value="ACCA"/>
</dbReference>
<dbReference type="InterPro" id="IPR049074">
    <property type="entry name" value="ACCA_BT"/>
</dbReference>
<dbReference type="InterPro" id="IPR034733">
    <property type="entry name" value="AcCoA_carboxyl_beta"/>
</dbReference>
<dbReference type="InterPro" id="IPR013537">
    <property type="entry name" value="AcCoA_COase_cen"/>
</dbReference>
<dbReference type="InterPro" id="IPR011761">
    <property type="entry name" value="ATP-grasp"/>
</dbReference>
<dbReference type="InterPro" id="IPR013815">
    <property type="entry name" value="ATP_grasp_subdomain_1"/>
</dbReference>
<dbReference type="InterPro" id="IPR005481">
    <property type="entry name" value="BC-like_N"/>
</dbReference>
<dbReference type="InterPro" id="IPR001882">
    <property type="entry name" value="Biotin_BS"/>
</dbReference>
<dbReference type="InterPro" id="IPR011764">
    <property type="entry name" value="Biotin_carboxylation_dom"/>
</dbReference>
<dbReference type="InterPro" id="IPR005482">
    <property type="entry name" value="Biotin_COase_C"/>
</dbReference>
<dbReference type="InterPro" id="IPR000089">
    <property type="entry name" value="Biotin_lipoyl"/>
</dbReference>
<dbReference type="InterPro" id="IPR005479">
    <property type="entry name" value="CbamoylP_synth_lsu-like_ATP-bd"/>
</dbReference>
<dbReference type="InterPro" id="IPR029045">
    <property type="entry name" value="ClpP/crotonase-like_dom_sf"/>
</dbReference>
<dbReference type="InterPro" id="IPR011763">
    <property type="entry name" value="COA_CT_C"/>
</dbReference>
<dbReference type="InterPro" id="IPR011762">
    <property type="entry name" value="COA_CT_N"/>
</dbReference>
<dbReference type="InterPro" id="IPR016185">
    <property type="entry name" value="PreATP-grasp_dom_sf"/>
</dbReference>
<dbReference type="InterPro" id="IPR011054">
    <property type="entry name" value="Rudment_hybrid_motif"/>
</dbReference>
<dbReference type="InterPro" id="IPR011053">
    <property type="entry name" value="Single_hybrid_motif"/>
</dbReference>
<dbReference type="PANTHER" id="PTHR45728:SF3">
    <property type="entry name" value="ACETYL-COA CARBOXYLASE"/>
    <property type="match status" value="1"/>
</dbReference>
<dbReference type="PANTHER" id="PTHR45728">
    <property type="entry name" value="ACETYL-COA CARBOXYLASE, ISOFORM A"/>
    <property type="match status" value="1"/>
</dbReference>
<dbReference type="Pfam" id="PF08326">
    <property type="entry name" value="ACC_central"/>
    <property type="match status" value="1"/>
</dbReference>
<dbReference type="Pfam" id="PF21385">
    <property type="entry name" value="ACCA_BT"/>
    <property type="match status" value="1"/>
</dbReference>
<dbReference type="Pfam" id="PF02785">
    <property type="entry name" value="Biotin_carb_C"/>
    <property type="match status" value="1"/>
</dbReference>
<dbReference type="Pfam" id="PF00289">
    <property type="entry name" value="Biotin_carb_N"/>
    <property type="match status" value="1"/>
</dbReference>
<dbReference type="Pfam" id="PF00364">
    <property type="entry name" value="Biotin_lipoyl"/>
    <property type="match status" value="1"/>
</dbReference>
<dbReference type="Pfam" id="PF01039">
    <property type="entry name" value="Carboxyl_trans"/>
    <property type="match status" value="1"/>
</dbReference>
<dbReference type="Pfam" id="PF02786">
    <property type="entry name" value="CPSase_L_D2"/>
    <property type="match status" value="1"/>
</dbReference>
<dbReference type="SMART" id="SM00878">
    <property type="entry name" value="Biotin_carb_C"/>
    <property type="match status" value="1"/>
</dbReference>
<dbReference type="SUPFAM" id="SSF52096">
    <property type="entry name" value="ClpP/crotonase"/>
    <property type="match status" value="2"/>
</dbReference>
<dbReference type="SUPFAM" id="SSF56059">
    <property type="entry name" value="Glutathione synthetase ATP-binding domain-like"/>
    <property type="match status" value="1"/>
</dbReference>
<dbReference type="SUPFAM" id="SSF52440">
    <property type="entry name" value="PreATP-grasp domain"/>
    <property type="match status" value="1"/>
</dbReference>
<dbReference type="SUPFAM" id="SSF51246">
    <property type="entry name" value="Rudiment single hybrid motif"/>
    <property type="match status" value="1"/>
</dbReference>
<dbReference type="SUPFAM" id="SSF51230">
    <property type="entry name" value="Single hybrid motif"/>
    <property type="match status" value="1"/>
</dbReference>
<dbReference type="PROSITE" id="PS50975">
    <property type="entry name" value="ATP_GRASP"/>
    <property type="match status" value="1"/>
</dbReference>
<dbReference type="PROSITE" id="PS50979">
    <property type="entry name" value="BC"/>
    <property type="match status" value="1"/>
</dbReference>
<dbReference type="PROSITE" id="PS00188">
    <property type="entry name" value="BIOTIN"/>
    <property type="match status" value="1"/>
</dbReference>
<dbReference type="PROSITE" id="PS50968">
    <property type="entry name" value="BIOTINYL_LIPOYL"/>
    <property type="match status" value="1"/>
</dbReference>
<dbReference type="PROSITE" id="PS50989">
    <property type="entry name" value="COA_CT_CTER"/>
    <property type="match status" value="1"/>
</dbReference>
<dbReference type="PROSITE" id="PS50980">
    <property type="entry name" value="COA_CT_NTER"/>
    <property type="match status" value="1"/>
</dbReference>
<dbReference type="PROSITE" id="PS00866">
    <property type="entry name" value="CPSASE_1"/>
    <property type="match status" value="1"/>
</dbReference>
<dbReference type="PROSITE" id="PS00867">
    <property type="entry name" value="CPSASE_2"/>
    <property type="match status" value="1"/>
</dbReference>
<keyword id="KW-0067">ATP-binding</keyword>
<keyword id="KW-0092">Biotin</keyword>
<keyword id="KW-0275">Fatty acid biosynthesis</keyword>
<keyword id="KW-0276">Fatty acid metabolism</keyword>
<keyword id="KW-0436">Ligase</keyword>
<keyword id="KW-0444">Lipid biosynthesis</keyword>
<keyword id="KW-0443">Lipid metabolism</keyword>
<keyword id="KW-0496">Mitochondrion</keyword>
<keyword id="KW-0511">Multifunctional enzyme</keyword>
<keyword id="KW-0547">Nucleotide-binding</keyword>
<keyword id="KW-0809">Transit peptide</keyword>
<sequence length="2273" mass="259162">KGKTITHGQSWGARRIHSHFYITIFTITCIRIGQYKLALYLDPYRFYNITGSQIVRLKGQRPEYRKRIFAHSYRHSSRIGLNFPSRRRYSNYVDRGNIHKHTRLPPQFIGLNTVESAQPSILRDFVDLRGGHTVISKILIANNGIAAVKEMRSIRKWAYETFNDEKIIQFVVMATPDDLHANSEYIRMADQYVQVPGGTNNNNYANIDLILDVAEQTDVDAVWAGWGHASENPCLPELLASSQRKILFIGPPGRAMRSLGDKISSTIVAQSAKIPCIPWSGSHIDTIHIDNKTNFVSVPDDVYVRGCCSSPEDALEKAKLIGFPVMIKASEGGGGKGIRRVDNEDDFIALYRQAVNETPGSPMFVMKVVTDARHLEVQLLADQYGTNITLFGRDCSIQRRHQKIIEEAPVTITKPETFQRMERAAIRLGELVGYVSAGTVEYLYSPKDDKFYFLELNPRLQVEHPTTEMISGVNLPATQLQIAMGIPMHMISDIRKLYGLDPTGTSYIDFKNLKRPSPKGHCISCRITSEDPNEGFKPSTGKIHELNFRSSSNVWGYFSVGNNGAIHSFSDSQFGHIFAVGNDRQDAKQNMVLALKDFSIRGEFKTPIEYLIELLETRDFESNNISTGWLDDLILKNLSSDSKLDPTLAIICGAAMKAYVFTEKVRNKYLELLRRGQVPPKDFLKTKFPVDFIFDNNRYLFNVAQSSEEQFILSINKSQCEVNVQKLSGDCLLISVDGKCHTVYWKDDIRGTRLSIDSNTIFLEAELNPTQVISPTPGKLVKYLVRSGDHVFAGQQYAEIEIMKMQMPLVAKSDGVIELLRQPGSIIEAGDVIAKLTLDSPSKANESSLYRGELPVLGPPLIEGSRPNHKLRVLINRLENILNGYHENSGIETTLKELIKILRDGRLPYSEWDSQISTVRNRLPRQLNEGLGNLVKKSVSFPAKELHKLMKRYLEENTNDHVVYVALQPLLKISERYSEGLANHECEIFLKLIKKYYAVEKIFENHDIHEERNLLNLRRKDLTNLKEILCISLSHANVVAKNKLVTAILHEYEPLCQDSSKMSLKFRAVIHDLASLESKWAKEVAVKARSVLLRGIFPPIKKRKEHIKTLLQLHIKDTGAENIHSRNIYSCMRDFGNLIHSNLIQLQDLFFFFGHQDTALSSIASEIYARYAYGNYQLKSIKIHKGAPDLLMSWQFSSLRNYLVNPDGESDEFTKLSKPPSTSGKSSANSFGLLVNMRALESLEKTLDEVYEQIHIPEERLSSGENSLIVNILSPIRYRSENDLIKTLKIKLHENERGLSKLKVNRITFAFIAANAPTVKFYSFDGTTYDEISQIRNMDPSYEAPLELGKMSNYKIRSLPTYDSSIRIFEGISKFTPLDKRFFVRKIINSSMYNDQKTTEENLKAEINAQVVYMLEHLGAVDTSNSDLNHIFLSFNTVLNIPVHRLEEIVSTILKTHETRLFQERITDVEICISVECLETKKPAPLRLLISNKSGYVVKIETYYEKIGKNGNLILEPCSEQSHYSQKSLSLPYSVKDWLQPKRYKAQFMGTTYVYDFPGLFHQAAIQQWKRYFPKHKLNDSFFSWVELIEQNGNLIKVNREPGLNNIGMVAFEIMVQTPEYPEGRNMIVISNDITYNIGSFGPREDLFFDRVTNYARERGIPRIYLAANSGAKLGIAEELIPLFRVAWNDPSDPTKGFQYLYLAPKDMQLLKDYGKGNSVVVEHKMVYGEERYIIKAIVGFEEGLGVECLQGSGLIAGATSKAYRDIFTITAVTCRSVGIGSYLVRLGQRTIQVEDKPIILTGASAINKVLGTDIYTSNLQIGGTQIMYKNGIAHLTAGNDMKAIEKIMTWLSYVPAKRDMSPPLLETMDRWDRDVDFKPAKQVPYEARWLIEGKWDSNNNFQSGLFDKDSFFETLSGWAKGVIVGRARLGGIPVGVIAVETKTIEEIIPADPANLDSSEFSVKEAGQVWYPNSAFKTAQTINDFNYGEQLPLIILANWRGFSGGQRDMYNEVLKYGSFIVDALVDYKQPILIYIPPFGELRGGSWVVIDPTINPEQMEMYADVESRGGVLEPDGVVSIKYRKEKMIETMIRLDSTYGHLRRTLTEKKLSLEKQNDLTKRLKIRERQLIPIYNQISIQFADLHDRSTRMLVKGVIRKELEWKKSRRFLYWRLRRRLNEGQVIKRLQKKTCDNKTKMKYDDLLKIVQSWYNDLDVNDDRAVVEFIERNSKKIDKNIEEFEISLLIDELKKKFEDRRGNIVLEELTRLVDSKRKR</sequence>